<protein>
    <recommendedName>
        <fullName evidence="2">N-methyltransferase dtpB</fullName>
        <ecNumber evidence="1">2.1.1.-</ecNumber>
    </recommendedName>
    <alternativeName>
        <fullName evidence="2">Ditryptophenaline biosynthesis protein B</fullName>
    </alternativeName>
</protein>
<accession>B8NR70</accession>
<proteinExistence type="evidence at protein level"/>
<gene>
    <name evidence="2" type="primary">dtpB</name>
    <name type="ORF">AFLA_005450</name>
</gene>
<dbReference type="EC" id="2.1.1.-" evidence="1"/>
<dbReference type="EMBL" id="EQ963482">
    <property type="protein sequence ID" value="EED47903.1"/>
    <property type="molecule type" value="Genomic_DNA"/>
</dbReference>
<dbReference type="RefSeq" id="XP_002382745.1">
    <property type="nucleotide sequence ID" value="XM_002382704.1"/>
</dbReference>
<dbReference type="SMR" id="B8NR70"/>
<dbReference type="STRING" id="332952.B8NR70"/>
<dbReference type="EnsemblFungi" id="EED47903">
    <property type="protein sequence ID" value="EED47903"/>
    <property type="gene ID" value="AFLA_005450"/>
</dbReference>
<dbReference type="VEuPathDB" id="FungiDB:AFLA_011895"/>
<dbReference type="eggNOG" id="ENOG502QS9T">
    <property type="taxonomic scope" value="Eukaryota"/>
</dbReference>
<dbReference type="HOGENOM" id="CLU_049766_0_2_1"/>
<dbReference type="OMA" id="RVEMHLV"/>
<dbReference type="GO" id="GO:0008168">
    <property type="term" value="F:methyltransferase activity"/>
    <property type="evidence" value="ECO:0007669"/>
    <property type="project" value="UniProtKB-KW"/>
</dbReference>
<dbReference type="GO" id="GO:0009820">
    <property type="term" value="P:alkaloid metabolic process"/>
    <property type="evidence" value="ECO:0007669"/>
    <property type="project" value="UniProtKB-KW"/>
</dbReference>
<dbReference type="GO" id="GO:0032259">
    <property type="term" value="P:methylation"/>
    <property type="evidence" value="ECO:0007669"/>
    <property type="project" value="UniProtKB-KW"/>
</dbReference>
<dbReference type="Gene3D" id="3.40.50.150">
    <property type="entry name" value="Vaccinia Virus protein VP39"/>
    <property type="match status" value="1"/>
</dbReference>
<dbReference type="InterPro" id="IPR051128">
    <property type="entry name" value="EgtD_Methyltrsf_superfamily"/>
</dbReference>
<dbReference type="InterPro" id="IPR019257">
    <property type="entry name" value="MeTrfase_dom"/>
</dbReference>
<dbReference type="InterPro" id="IPR017804">
    <property type="entry name" value="MeTrfase_EgtD-like"/>
</dbReference>
<dbReference type="InterPro" id="IPR029063">
    <property type="entry name" value="SAM-dependent_MTases_sf"/>
</dbReference>
<dbReference type="InterPro" id="IPR017805">
    <property type="entry name" value="SAM_MeTrfase_EasF-type_put"/>
</dbReference>
<dbReference type="NCBIfam" id="TIGR03439">
    <property type="entry name" value="methyl_EasF"/>
    <property type="match status" value="1"/>
</dbReference>
<dbReference type="PANTHER" id="PTHR43397">
    <property type="entry name" value="ERGOTHIONEINE BIOSYNTHESIS PROTEIN 1"/>
    <property type="match status" value="1"/>
</dbReference>
<dbReference type="PANTHER" id="PTHR43397:SF2">
    <property type="entry name" value="HISTIDINE-SPECIFIC METHYLTRANSFERASE SAM-DEPENDENT DOMAIN-CONTAINING PROTEIN"/>
    <property type="match status" value="1"/>
</dbReference>
<dbReference type="Pfam" id="PF10017">
    <property type="entry name" value="Methyltransf_33"/>
    <property type="match status" value="1"/>
</dbReference>
<dbReference type="PIRSF" id="PIRSF018005">
    <property type="entry name" value="UCP018005"/>
    <property type="match status" value="1"/>
</dbReference>
<keyword id="KW-0017">Alkaloid metabolism</keyword>
<keyword id="KW-0489">Methyltransferase</keyword>
<keyword id="KW-0949">S-adenosyl-L-methionine</keyword>
<keyword id="KW-0808">Transferase</keyword>
<feature type="chain" id="PRO_0000438202" description="N-methyltransferase dtpB">
    <location>
        <begin position="1"/>
        <end position="357"/>
    </location>
</feature>
<name>DTPB_ASPFN</name>
<evidence type="ECO:0000269" key="1">
    <source>
    </source>
</evidence>
<evidence type="ECO:0000303" key="2">
    <source>
    </source>
</evidence>
<evidence type="ECO:0000305" key="3"/>
<organism>
    <name type="scientific">Aspergillus flavus (strain ATCC 200026 / FGSC A1120 / IAM 13836 / NRRL 3357 / JCM 12722 / SRRC 167)</name>
    <dbReference type="NCBI Taxonomy" id="332952"/>
    <lineage>
        <taxon>Eukaryota</taxon>
        <taxon>Fungi</taxon>
        <taxon>Dikarya</taxon>
        <taxon>Ascomycota</taxon>
        <taxon>Pezizomycotina</taxon>
        <taxon>Eurotiomycetes</taxon>
        <taxon>Eurotiomycetidae</taxon>
        <taxon>Eurotiales</taxon>
        <taxon>Aspergillaceae</taxon>
        <taxon>Aspergillus</taxon>
        <taxon>Aspergillus subgen. Circumdati</taxon>
    </lineage>
</organism>
<sequence>MVKNNAGIVNMFEKRRTQTTTIPIIEIMREKRSEDLETEIVQGLQFDSLQLPQELLWDDAGQILFDDLCNSSTYYLTKKEKEILQKYSTDMAATIPEGSTLIELGCGSLRKTGILLSALEKSHKAVTYYALDVSQDSLENGLAQLHKGLGCLDHVELRGLWGTYEDAIAWLADQHPINVHNGITFLWMGNSMTNMHLAQAQSLLSRMTKTCIGSGIPCQILVSVDSCSAEDIVMGAYDTDSQPLKDFIMNGLKSANRILGKDVFCASDWTFGTVLDRVRHEVQVFYAPTRDVTIHIDSHPCKITKGEKIAVISSGKWPEPYFRSMLEGIGLQVLDLWRDSDQFYCMNPLPLICSFPG</sequence>
<reference key="1">
    <citation type="journal article" date="2015" name="Genome Announc.">
        <title>Genome sequence of Aspergillus flavus NRRL 3357, a strain that causes aflatoxin contamination of food and feed.</title>
        <authorList>
            <person name="Nierman W.C."/>
            <person name="Yu J."/>
            <person name="Fedorova-Abrams N.D."/>
            <person name="Losada L."/>
            <person name="Cleveland T.E."/>
            <person name="Bhatnagar D."/>
            <person name="Bennett J.W."/>
            <person name="Dean R."/>
            <person name="Payne G.A."/>
        </authorList>
    </citation>
    <scope>NUCLEOTIDE SEQUENCE [LARGE SCALE GENOMIC DNA]</scope>
    <source>
        <strain>ATCC 200026 / FGSC A1120 / IAM 13836 / NRRL 3357 / JCM 12722 / SRRC 167</strain>
    </source>
</reference>
<reference key="2">
    <citation type="journal article" date="2014" name="ChemBioChem">
        <title>Cytochrome P450 as dimerization catalyst in diketopiperazine alkaloid biosynthesis.</title>
        <authorList>
            <person name="Saruwatari T."/>
            <person name="Yagishita F."/>
            <person name="Mino T."/>
            <person name="Noguchi H."/>
            <person name="Hotta K."/>
            <person name="Watanabe K."/>
        </authorList>
    </citation>
    <scope>FUNCTION</scope>
    <scope>CATALYTIC ACTIVITY</scope>
    <scope>DISRUPTION PHENOTYPE</scope>
</reference>
<comment type="function">
    <text evidence="1">N-methyltransferase; part of the gene cluster that mediates the biosynthesis of the dimeric diketopiperazine alkaloid ditryptophenaline (PubMed:24677498). The nonribosomal peptide synthase dtpA accepts L-tryptophan and L-phenylalanine as its substrates and forms the phenylalanyl-tryptophanyl cyclic dipeptide product cyclophenylalanyltryptophenyl (PubMed:24677498). The N-methyltransferase dtpB is responsible for the N-methylation of cyclophenylalanyltryptophenyl to yield cyclo-N-methylphenylalanyltryptophenyl (PubMed:24677498). The cytochrome P450 monooxygenase is responsible not only for pyrroloindole ring formation but also for concurrent dimerization of N-methylphenylalanyltryptophanyl diketopiperazine monomers into a homodimeric product (PubMed:24677498).</text>
</comment>
<comment type="pathway">
    <text evidence="1">Alkaloid biosynthesis.</text>
</comment>
<comment type="disruption phenotype">
    <text evidence="1">Abolishes the production of ditryptophenaline (PubMed:24677498).</text>
</comment>
<comment type="similarity">
    <text evidence="3">Belongs to the methyltransferase superfamily.</text>
</comment>